<name>LEUD_STRGC</name>
<sequence>MEKFTIYTGTTVPLMNDNIDTDQILPKQFLKLIDKKGFGKYLMYAWRYLDNQYTEDPDFVFNRPEYRKATILITGDNFGAGSSREHAAWALADYGFKVVIAGSFGDIHYNNELNNGMLPIVQPLEVRQALANLKPTDQVTVDLEQQKIFSPVGEFSFDIDGEWKHKLLNGLDDIGITLLYEDLIAEYEKNRPSYWQ</sequence>
<protein>
    <recommendedName>
        <fullName evidence="1">3-isopropylmalate dehydratase small subunit</fullName>
        <ecNumber evidence="1">4.2.1.33</ecNumber>
    </recommendedName>
    <alternativeName>
        <fullName evidence="1">Alpha-IPM isomerase</fullName>
        <shortName evidence="1">IPMI</shortName>
    </alternativeName>
    <alternativeName>
        <fullName evidence="1">Isopropylmalate isomerase</fullName>
    </alternativeName>
</protein>
<gene>
    <name evidence="1" type="primary">leuD</name>
    <name type="ordered locus">SGO_0910</name>
</gene>
<evidence type="ECO:0000255" key="1">
    <source>
        <dbReference type="HAMAP-Rule" id="MF_01031"/>
    </source>
</evidence>
<keyword id="KW-0028">Amino-acid biosynthesis</keyword>
<keyword id="KW-0100">Branched-chain amino acid biosynthesis</keyword>
<keyword id="KW-0432">Leucine biosynthesis</keyword>
<keyword id="KW-0456">Lyase</keyword>
<keyword id="KW-1185">Reference proteome</keyword>
<proteinExistence type="inferred from homology"/>
<accession>A8AWP6</accession>
<reference key="1">
    <citation type="journal article" date="2007" name="J. Bacteriol.">
        <title>Genome-wide transcriptional changes in Streptococcus gordonii in response to competence signaling peptide.</title>
        <authorList>
            <person name="Vickerman M.M."/>
            <person name="Iobst S."/>
            <person name="Jesionowski A.M."/>
            <person name="Gill S.R."/>
        </authorList>
    </citation>
    <scope>NUCLEOTIDE SEQUENCE [LARGE SCALE GENOMIC DNA]</scope>
    <source>
        <strain>Challis / ATCC 35105 / BCRC 15272 / CH1 / DL1 / V288</strain>
    </source>
</reference>
<organism>
    <name type="scientific">Streptococcus gordonii (strain Challis / ATCC 35105 / BCRC 15272 / CH1 / DL1 / V288)</name>
    <dbReference type="NCBI Taxonomy" id="467705"/>
    <lineage>
        <taxon>Bacteria</taxon>
        <taxon>Bacillati</taxon>
        <taxon>Bacillota</taxon>
        <taxon>Bacilli</taxon>
        <taxon>Lactobacillales</taxon>
        <taxon>Streptococcaceae</taxon>
        <taxon>Streptococcus</taxon>
    </lineage>
</organism>
<dbReference type="EC" id="4.2.1.33" evidence="1"/>
<dbReference type="EMBL" id="CP000725">
    <property type="protein sequence ID" value="ABV10329.1"/>
    <property type="molecule type" value="Genomic_DNA"/>
</dbReference>
<dbReference type="RefSeq" id="WP_008808885.1">
    <property type="nucleotide sequence ID" value="NC_009785.1"/>
</dbReference>
<dbReference type="SMR" id="A8AWP6"/>
<dbReference type="STRING" id="467705.SGO_0910"/>
<dbReference type="KEGG" id="sgo:SGO_0910"/>
<dbReference type="eggNOG" id="COG0066">
    <property type="taxonomic scope" value="Bacteria"/>
</dbReference>
<dbReference type="HOGENOM" id="CLU_081378_0_3_9"/>
<dbReference type="UniPathway" id="UPA00048">
    <property type="reaction ID" value="UER00071"/>
</dbReference>
<dbReference type="Proteomes" id="UP000001131">
    <property type="component" value="Chromosome"/>
</dbReference>
<dbReference type="GO" id="GO:0009316">
    <property type="term" value="C:3-isopropylmalate dehydratase complex"/>
    <property type="evidence" value="ECO:0007669"/>
    <property type="project" value="InterPro"/>
</dbReference>
<dbReference type="GO" id="GO:0003861">
    <property type="term" value="F:3-isopropylmalate dehydratase activity"/>
    <property type="evidence" value="ECO:0007669"/>
    <property type="project" value="UniProtKB-UniRule"/>
</dbReference>
<dbReference type="GO" id="GO:0009098">
    <property type="term" value="P:L-leucine biosynthetic process"/>
    <property type="evidence" value="ECO:0007669"/>
    <property type="project" value="UniProtKB-UniRule"/>
</dbReference>
<dbReference type="CDD" id="cd01577">
    <property type="entry name" value="IPMI_Swivel"/>
    <property type="match status" value="1"/>
</dbReference>
<dbReference type="FunFam" id="3.20.19.10:FF:000003">
    <property type="entry name" value="3-isopropylmalate dehydratase small subunit"/>
    <property type="match status" value="1"/>
</dbReference>
<dbReference type="Gene3D" id="3.20.19.10">
    <property type="entry name" value="Aconitase, domain 4"/>
    <property type="match status" value="1"/>
</dbReference>
<dbReference type="HAMAP" id="MF_01031">
    <property type="entry name" value="LeuD_type1"/>
    <property type="match status" value="1"/>
</dbReference>
<dbReference type="InterPro" id="IPR004431">
    <property type="entry name" value="3-IsopropMal_deHydase_ssu"/>
</dbReference>
<dbReference type="InterPro" id="IPR015928">
    <property type="entry name" value="Aconitase/3IPM_dehydase_swvl"/>
</dbReference>
<dbReference type="InterPro" id="IPR000573">
    <property type="entry name" value="AconitaseA/IPMdHydase_ssu_swvl"/>
</dbReference>
<dbReference type="InterPro" id="IPR033940">
    <property type="entry name" value="IPMI_Swivel"/>
</dbReference>
<dbReference type="InterPro" id="IPR050075">
    <property type="entry name" value="LeuD"/>
</dbReference>
<dbReference type="NCBIfam" id="TIGR00171">
    <property type="entry name" value="leuD"/>
    <property type="match status" value="1"/>
</dbReference>
<dbReference type="NCBIfam" id="NF002458">
    <property type="entry name" value="PRK01641.1"/>
    <property type="match status" value="1"/>
</dbReference>
<dbReference type="PANTHER" id="PTHR43345:SF5">
    <property type="entry name" value="3-ISOPROPYLMALATE DEHYDRATASE SMALL SUBUNIT"/>
    <property type="match status" value="1"/>
</dbReference>
<dbReference type="PANTHER" id="PTHR43345">
    <property type="entry name" value="3-ISOPROPYLMALATE DEHYDRATASE SMALL SUBUNIT 2-RELATED-RELATED"/>
    <property type="match status" value="1"/>
</dbReference>
<dbReference type="Pfam" id="PF00694">
    <property type="entry name" value="Aconitase_C"/>
    <property type="match status" value="1"/>
</dbReference>
<dbReference type="SUPFAM" id="SSF52016">
    <property type="entry name" value="LeuD/IlvD-like"/>
    <property type="match status" value="1"/>
</dbReference>
<comment type="function">
    <text evidence="1">Catalyzes the isomerization between 2-isopropylmalate and 3-isopropylmalate, via the formation of 2-isopropylmaleate.</text>
</comment>
<comment type="catalytic activity">
    <reaction evidence="1">
        <text>(2R,3S)-3-isopropylmalate = (2S)-2-isopropylmalate</text>
        <dbReference type="Rhea" id="RHEA:32287"/>
        <dbReference type="ChEBI" id="CHEBI:1178"/>
        <dbReference type="ChEBI" id="CHEBI:35121"/>
        <dbReference type="EC" id="4.2.1.33"/>
    </reaction>
</comment>
<comment type="pathway">
    <text evidence="1">Amino-acid biosynthesis; L-leucine biosynthesis; L-leucine from 3-methyl-2-oxobutanoate: step 2/4.</text>
</comment>
<comment type="subunit">
    <text evidence="1">Heterodimer of LeuC and LeuD.</text>
</comment>
<comment type="similarity">
    <text evidence="1">Belongs to the LeuD family. LeuD type 1 subfamily.</text>
</comment>
<feature type="chain" id="PRO_1000084272" description="3-isopropylmalate dehydratase small subunit">
    <location>
        <begin position="1"/>
        <end position="196"/>
    </location>
</feature>